<proteinExistence type="inferred from homology"/>
<reference key="1">
    <citation type="journal article" date="2007" name="PLoS Genet.">
        <title>Patterns and implications of gene gain and loss in the evolution of Prochlorococcus.</title>
        <authorList>
            <person name="Kettler G.C."/>
            <person name="Martiny A.C."/>
            <person name="Huang K."/>
            <person name="Zucker J."/>
            <person name="Coleman M.L."/>
            <person name="Rodrigue S."/>
            <person name="Chen F."/>
            <person name="Lapidus A."/>
            <person name="Ferriera S."/>
            <person name="Johnson J."/>
            <person name="Steglich C."/>
            <person name="Church G.M."/>
            <person name="Richardson P."/>
            <person name="Chisholm S.W."/>
        </authorList>
    </citation>
    <scope>NUCLEOTIDE SEQUENCE [LARGE SCALE GENOMIC DNA]</scope>
    <source>
        <strain>NATL2A</strain>
    </source>
</reference>
<dbReference type="EC" id="1.2.1.41" evidence="1"/>
<dbReference type="EMBL" id="CP000095">
    <property type="protein sequence ID" value="AAZ57518.1"/>
    <property type="molecule type" value="Genomic_DNA"/>
</dbReference>
<dbReference type="RefSeq" id="WP_011293560.1">
    <property type="nucleotide sequence ID" value="NC_007335.2"/>
</dbReference>
<dbReference type="SMR" id="Q46LW0"/>
<dbReference type="STRING" id="59920.PMN2A_0026"/>
<dbReference type="KEGG" id="pmn:PMN2A_0026"/>
<dbReference type="HOGENOM" id="CLU_030231_0_1_3"/>
<dbReference type="OrthoDB" id="9809970at2"/>
<dbReference type="PhylomeDB" id="Q46LW0"/>
<dbReference type="UniPathway" id="UPA00098">
    <property type="reaction ID" value="UER00360"/>
</dbReference>
<dbReference type="Proteomes" id="UP000002535">
    <property type="component" value="Chromosome"/>
</dbReference>
<dbReference type="GO" id="GO:0005737">
    <property type="term" value="C:cytoplasm"/>
    <property type="evidence" value="ECO:0007669"/>
    <property type="project" value="UniProtKB-SubCell"/>
</dbReference>
<dbReference type="GO" id="GO:0004350">
    <property type="term" value="F:glutamate-5-semialdehyde dehydrogenase activity"/>
    <property type="evidence" value="ECO:0007669"/>
    <property type="project" value="UniProtKB-UniRule"/>
</dbReference>
<dbReference type="GO" id="GO:0050661">
    <property type="term" value="F:NADP binding"/>
    <property type="evidence" value="ECO:0007669"/>
    <property type="project" value="InterPro"/>
</dbReference>
<dbReference type="GO" id="GO:0055129">
    <property type="term" value="P:L-proline biosynthetic process"/>
    <property type="evidence" value="ECO:0007669"/>
    <property type="project" value="UniProtKB-UniRule"/>
</dbReference>
<dbReference type="CDD" id="cd07079">
    <property type="entry name" value="ALDH_F18-19_ProA-GPR"/>
    <property type="match status" value="1"/>
</dbReference>
<dbReference type="FunFam" id="3.40.309.10:FF:000006">
    <property type="entry name" value="Gamma-glutamyl phosphate reductase"/>
    <property type="match status" value="1"/>
</dbReference>
<dbReference type="Gene3D" id="3.40.605.10">
    <property type="entry name" value="Aldehyde Dehydrogenase, Chain A, domain 1"/>
    <property type="match status" value="1"/>
</dbReference>
<dbReference type="Gene3D" id="3.40.309.10">
    <property type="entry name" value="Aldehyde Dehydrogenase, Chain A, domain 2"/>
    <property type="match status" value="1"/>
</dbReference>
<dbReference type="HAMAP" id="MF_00412">
    <property type="entry name" value="ProA"/>
    <property type="match status" value="1"/>
</dbReference>
<dbReference type="InterPro" id="IPR016161">
    <property type="entry name" value="Ald_DH/histidinol_DH"/>
</dbReference>
<dbReference type="InterPro" id="IPR016163">
    <property type="entry name" value="Ald_DH_C"/>
</dbReference>
<dbReference type="InterPro" id="IPR016162">
    <property type="entry name" value="Ald_DH_N"/>
</dbReference>
<dbReference type="InterPro" id="IPR015590">
    <property type="entry name" value="Aldehyde_DH_dom"/>
</dbReference>
<dbReference type="InterPro" id="IPR020593">
    <property type="entry name" value="G-glutamylP_reductase_CS"/>
</dbReference>
<dbReference type="InterPro" id="IPR012134">
    <property type="entry name" value="Glu-5-SA_DH"/>
</dbReference>
<dbReference type="InterPro" id="IPR000965">
    <property type="entry name" value="GPR_dom"/>
</dbReference>
<dbReference type="NCBIfam" id="NF001221">
    <property type="entry name" value="PRK00197.1"/>
    <property type="match status" value="1"/>
</dbReference>
<dbReference type="NCBIfam" id="TIGR00407">
    <property type="entry name" value="proA"/>
    <property type="match status" value="1"/>
</dbReference>
<dbReference type="PANTHER" id="PTHR11063:SF8">
    <property type="entry name" value="DELTA-1-PYRROLINE-5-CARBOXYLATE SYNTHASE"/>
    <property type="match status" value="1"/>
</dbReference>
<dbReference type="PANTHER" id="PTHR11063">
    <property type="entry name" value="GLUTAMATE SEMIALDEHYDE DEHYDROGENASE"/>
    <property type="match status" value="1"/>
</dbReference>
<dbReference type="Pfam" id="PF00171">
    <property type="entry name" value="Aldedh"/>
    <property type="match status" value="1"/>
</dbReference>
<dbReference type="PIRSF" id="PIRSF000151">
    <property type="entry name" value="GPR"/>
    <property type="match status" value="1"/>
</dbReference>
<dbReference type="SUPFAM" id="SSF53720">
    <property type="entry name" value="ALDH-like"/>
    <property type="match status" value="1"/>
</dbReference>
<dbReference type="PROSITE" id="PS01223">
    <property type="entry name" value="PROA"/>
    <property type="match status" value="1"/>
</dbReference>
<comment type="function">
    <text evidence="1">Catalyzes the NADPH-dependent reduction of L-glutamate 5-phosphate into L-glutamate 5-semialdehyde and phosphate. The product spontaneously undergoes cyclization to form 1-pyrroline-5-carboxylate.</text>
</comment>
<comment type="catalytic activity">
    <reaction evidence="1">
        <text>L-glutamate 5-semialdehyde + phosphate + NADP(+) = L-glutamyl 5-phosphate + NADPH + H(+)</text>
        <dbReference type="Rhea" id="RHEA:19541"/>
        <dbReference type="ChEBI" id="CHEBI:15378"/>
        <dbReference type="ChEBI" id="CHEBI:43474"/>
        <dbReference type="ChEBI" id="CHEBI:57783"/>
        <dbReference type="ChEBI" id="CHEBI:58066"/>
        <dbReference type="ChEBI" id="CHEBI:58274"/>
        <dbReference type="ChEBI" id="CHEBI:58349"/>
        <dbReference type="EC" id="1.2.1.41"/>
    </reaction>
</comment>
<comment type="pathway">
    <text evidence="1">Amino-acid biosynthesis; L-proline biosynthesis; L-glutamate 5-semialdehyde from L-glutamate: step 2/2.</text>
</comment>
<comment type="subcellular location">
    <subcellularLocation>
        <location evidence="1">Cytoplasm</location>
    </subcellularLocation>
</comment>
<comment type="similarity">
    <text evidence="1">Belongs to the gamma-glutamyl phosphate reductase family.</text>
</comment>
<organism>
    <name type="scientific">Prochlorococcus marinus (strain NATL2A)</name>
    <dbReference type="NCBI Taxonomy" id="59920"/>
    <lineage>
        <taxon>Bacteria</taxon>
        <taxon>Bacillati</taxon>
        <taxon>Cyanobacteriota</taxon>
        <taxon>Cyanophyceae</taxon>
        <taxon>Synechococcales</taxon>
        <taxon>Prochlorococcaceae</taxon>
        <taxon>Prochlorococcus</taxon>
    </lineage>
</organism>
<feature type="chain" id="PRO_0000230012" description="Gamma-glutamyl phosphate reductase">
    <location>
        <begin position="1"/>
        <end position="438"/>
    </location>
</feature>
<evidence type="ECO:0000255" key="1">
    <source>
        <dbReference type="HAMAP-Rule" id="MF_00412"/>
    </source>
</evidence>
<name>PROA_PROMT</name>
<gene>
    <name evidence="1" type="primary">proA</name>
    <name type="ordered locus">PMN2A_0026</name>
</gene>
<keyword id="KW-0028">Amino-acid biosynthesis</keyword>
<keyword id="KW-0963">Cytoplasm</keyword>
<keyword id="KW-0521">NADP</keyword>
<keyword id="KW-0560">Oxidoreductase</keyword>
<keyword id="KW-0641">Proline biosynthesis</keyword>
<keyword id="KW-1185">Reference proteome</keyword>
<protein>
    <recommendedName>
        <fullName evidence="1">Gamma-glutamyl phosphate reductase</fullName>
        <shortName evidence="1">GPR</shortName>
        <ecNumber evidence="1">1.2.1.41</ecNumber>
    </recommendedName>
    <alternativeName>
        <fullName evidence="1">Glutamate-5-semialdehyde dehydrogenase</fullName>
    </alternativeName>
    <alternativeName>
        <fullName evidence="1">Glutamyl-gamma-semialdehyde dehydrogenase</fullName>
        <shortName evidence="1">GSA dehydrogenase</shortName>
    </alternativeName>
</protein>
<sequence length="438" mass="47802">MSTNFSVPEPTPQLVKVAESAKEASISLGQSTNKQRCEALTEMANALNDNADEILKANVQDLERSEKEGLNKSLLSRLQLTKTKLKGCIDGVLKVSNLADPIGKRQLHRELNENLILERVTVPLGVLGVIFESRPDALIQIASLAVRSGNGALLKGGSEAKDTNQAIMDSLDKGLRKANVGSGALSLLTTRQESLGLLRLDKFVNLIIPRGSNELVQFIQENTRIPVLGHADGICHLYVDNSVDIDKAISIALDSKIQYPAACNAIETLLIHEDIAEMFLKKGLPIFSSEGVTLKGDTKSQALGVKNKADESDWSKEYLDLILSIKIVRNVNEAIEHIRKYSSRHTEAIVTEDKMVAEKFLSSVDSAGVYHNCSTRFADGFRYGFGAEVGISTQTLPPRGPVGLEGLVTYRYYLRGDGDLVKDFASGDRSFSHIDLPL</sequence>
<accession>Q46LW0</accession>